<feature type="chain" id="PRO_0000266370" description="Guanylate kinase">
    <location>
        <begin position="1"/>
        <end position="206"/>
    </location>
</feature>
<feature type="domain" description="Guanylate kinase-like" evidence="1">
    <location>
        <begin position="6"/>
        <end position="184"/>
    </location>
</feature>
<feature type="binding site" evidence="1">
    <location>
        <begin position="13"/>
        <end position="20"/>
    </location>
    <ligand>
        <name>ATP</name>
        <dbReference type="ChEBI" id="CHEBI:30616"/>
    </ligand>
</feature>
<name>KGUA_PSET1</name>
<dbReference type="EC" id="2.7.4.8" evidence="1"/>
<dbReference type="EMBL" id="CR954246">
    <property type="protein sequence ID" value="CAI87833.1"/>
    <property type="molecule type" value="Genomic_DNA"/>
</dbReference>
<dbReference type="SMR" id="Q3IJH8"/>
<dbReference type="STRING" id="326442.PSHAa2790"/>
<dbReference type="KEGG" id="pha:PSHAa2790"/>
<dbReference type="eggNOG" id="COG0194">
    <property type="taxonomic scope" value="Bacteria"/>
</dbReference>
<dbReference type="HOGENOM" id="CLU_001715_1_0_6"/>
<dbReference type="BioCyc" id="PHAL326442:PSHA_RS13705-MONOMER"/>
<dbReference type="Proteomes" id="UP000006843">
    <property type="component" value="Chromosome I"/>
</dbReference>
<dbReference type="GO" id="GO:0005829">
    <property type="term" value="C:cytosol"/>
    <property type="evidence" value="ECO:0007669"/>
    <property type="project" value="TreeGrafter"/>
</dbReference>
<dbReference type="GO" id="GO:0005524">
    <property type="term" value="F:ATP binding"/>
    <property type="evidence" value="ECO:0007669"/>
    <property type="project" value="UniProtKB-UniRule"/>
</dbReference>
<dbReference type="GO" id="GO:0004385">
    <property type="term" value="F:guanylate kinase activity"/>
    <property type="evidence" value="ECO:0007669"/>
    <property type="project" value="UniProtKB-UniRule"/>
</dbReference>
<dbReference type="CDD" id="cd00071">
    <property type="entry name" value="GMPK"/>
    <property type="match status" value="1"/>
</dbReference>
<dbReference type="FunFam" id="3.40.50.300:FF:000084">
    <property type="entry name" value="Guanylate kinase"/>
    <property type="match status" value="1"/>
</dbReference>
<dbReference type="FunFam" id="3.30.63.10:FF:000002">
    <property type="entry name" value="Guanylate kinase 1"/>
    <property type="match status" value="1"/>
</dbReference>
<dbReference type="Gene3D" id="3.30.63.10">
    <property type="entry name" value="Guanylate Kinase phosphate binding domain"/>
    <property type="match status" value="1"/>
</dbReference>
<dbReference type="Gene3D" id="3.40.50.300">
    <property type="entry name" value="P-loop containing nucleotide triphosphate hydrolases"/>
    <property type="match status" value="1"/>
</dbReference>
<dbReference type="HAMAP" id="MF_00328">
    <property type="entry name" value="Guanylate_kinase"/>
    <property type="match status" value="1"/>
</dbReference>
<dbReference type="InterPro" id="IPR008145">
    <property type="entry name" value="GK/Ca_channel_bsu"/>
</dbReference>
<dbReference type="InterPro" id="IPR008144">
    <property type="entry name" value="Guanylate_kin-like_dom"/>
</dbReference>
<dbReference type="InterPro" id="IPR017665">
    <property type="entry name" value="Guanylate_kinase"/>
</dbReference>
<dbReference type="InterPro" id="IPR020590">
    <property type="entry name" value="Guanylate_kinase_CS"/>
</dbReference>
<dbReference type="InterPro" id="IPR027417">
    <property type="entry name" value="P-loop_NTPase"/>
</dbReference>
<dbReference type="NCBIfam" id="TIGR03263">
    <property type="entry name" value="guanyl_kin"/>
    <property type="match status" value="1"/>
</dbReference>
<dbReference type="PANTHER" id="PTHR23117:SF13">
    <property type="entry name" value="GUANYLATE KINASE"/>
    <property type="match status" value="1"/>
</dbReference>
<dbReference type="PANTHER" id="PTHR23117">
    <property type="entry name" value="GUANYLATE KINASE-RELATED"/>
    <property type="match status" value="1"/>
</dbReference>
<dbReference type="Pfam" id="PF00625">
    <property type="entry name" value="Guanylate_kin"/>
    <property type="match status" value="1"/>
</dbReference>
<dbReference type="SMART" id="SM00072">
    <property type="entry name" value="GuKc"/>
    <property type="match status" value="1"/>
</dbReference>
<dbReference type="SUPFAM" id="SSF52540">
    <property type="entry name" value="P-loop containing nucleoside triphosphate hydrolases"/>
    <property type="match status" value="1"/>
</dbReference>
<dbReference type="PROSITE" id="PS00856">
    <property type="entry name" value="GUANYLATE_KINASE_1"/>
    <property type="match status" value="1"/>
</dbReference>
<dbReference type="PROSITE" id="PS50052">
    <property type="entry name" value="GUANYLATE_KINASE_2"/>
    <property type="match status" value="1"/>
</dbReference>
<organism>
    <name type="scientific">Pseudoalteromonas translucida (strain TAC 125)</name>
    <dbReference type="NCBI Taxonomy" id="326442"/>
    <lineage>
        <taxon>Bacteria</taxon>
        <taxon>Pseudomonadati</taxon>
        <taxon>Pseudomonadota</taxon>
        <taxon>Gammaproteobacteria</taxon>
        <taxon>Alteromonadales</taxon>
        <taxon>Pseudoalteromonadaceae</taxon>
        <taxon>Pseudoalteromonas</taxon>
    </lineage>
</organism>
<keyword id="KW-0067">ATP-binding</keyword>
<keyword id="KW-0963">Cytoplasm</keyword>
<keyword id="KW-0418">Kinase</keyword>
<keyword id="KW-0547">Nucleotide-binding</keyword>
<keyword id="KW-1185">Reference proteome</keyword>
<keyword id="KW-0808">Transferase</keyword>
<comment type="function">
    <text evidence="1">Essential for recycling GMP and indirectly, cGMP.</text>
</comment>
<comment type="catalytic activity">
    <reaction evidence="1">
        <text>GMP + ATP = GDP + ADP</text>
        <dbReference type="Rhea" id="RHEA:20780"/>
        <dbReference type="ChEBI" id="CHEBI:30616"/>
        <dbReference type="ChEBI" id="CHEBI:58115"/>
        <dbReference type="ChEBI" id="CHEBI:58189"/>
        <dbReference type="ChEBI" id="CHEBI:456216"/>
        <dbReference type="EC" id="2.7.4.8"/>
    </reaction>
</comment>
<comment type="subcellular location">
    <subcellularLocation>
        <location evidence="1">Cytoplasm</location>
    </subcellularLocation>
</comment>
<comment type="similarity">
    <text evidence="1">Belongs to the guanylate kinase family.</text>
</comment>
<sequence>MAQTRGNLFILSAPSGAGKSSLINALLKKHTDMKVSVSHTTRAKRPGEENGVHYHFVSTDEFKALITKDDFFEWAQVFDNYYGTSKQAIESQLDAGIDVFLDIDWQGAQQVRKIMPSVQTIFILPPSKAELEQRLNNRGQDSQEIIAGRMAQAQSETSHYNEYDFVIVNDDFDTALTDIETIVMAQRLTLKMQSVRHQSLLNSLLK</sequence>
<evidence type="ECO:0000255" key="1">
    <source>
        <dbReference type="HAMAP-Rule" id="MF_00328"/>
    </source>
</evidence>
<proteinExistence type="inferred from homology"/>
<reference key="1">
    <citation type="journal article" date="2005" name="Genome Res.">
        <title>Coping with cold: the genome of the versatile marine Antarctica bacterium Pseudoalteromonas haloplanktis TAC125.</title>
        <authorList>
            <person name="Medigue C."/>
            <person name="Krin E."/>
            <person name="Pascal G."/>
            <person name="Barbe V."/>
            <person name="Bernsel A."/>
            <person name="Bertin P.N."/>
            <person name="Cheung F."/>
            <person name="Cruveiller S."/>
            <person name="D'Amico S."/>
            <person name="Duilio A."/>
            <person name="Fang G."/>
            <person name="Feller G."/>
            <person name="Ho C."/>
            <person name="Mangenot S."/>
            <person name="Marino G."/>
            <person name="Nilsson J."/>
            <person name="Parrilli E."/>
            <person name="Rocha E.P.C."/>
            <person name="Rouy Z."/>
            <person name="Sekowska A."/>
            <person name="Tutino M.L."/>
            <person name="Vallenet D."/>
            <person name="von Heijne G."/>
            <person name="Danchin A."/>
        </authorList>
    </citation>
    <scope>NUCLEOTIDE SEQUENCE [LARGE SCALE GENOMIC DNA]</scope>
    <source>
        <strain>TAC 125</strain>
    </source>
</reference>
<protein>
    <recommendedName>
        <fullName evidence="1">Guanylate kinase</fullName>
        <ecNumber evidence="1">2.7.4.8</ecNumber>
    </recommendedName>
    <alternativeName>
        <fullName evidence="1">GMP kinase</fullName>
    </alternativeName>
</protein>
<accession>Q3IJH8</accession>
<gene>
    <name evidence="1" type="primary">gmk</name>
    <name type="ordered locus">PSHAa2790</name>
</gene>